<comment type="function">
    <text evidence="1">Protein S19 forms a complex with S13 that binds strongly to the 16S ribosomal RNA.</text>
</comment>
<comment type="similarity">
    <text evidence="1">Belongs to the universal ribosomal protein uS19 family.</text>
</comment>
<evidence type="ECO:0000255" key="1">
    <source>
        <dbReference type="HAMAP-Rule" id="MF_00531"/>
    </source>
</evidence>
<evidence type="ECO:0000305" key="2"/>
<accession>Q3SSW2</accession>
<sequence length="92" mass="10262">MVRSVWKGPFVEGSLLKKADAARASGRHDVIKIWSRRSTILPQFVGLVFGVYNGQKHVPVSVNEEMVGHKFGEFSPTRTFHGHSGDKKAKRS</sequence>
<organism>
    <name type="scientific">Nitrobacter winogradskyi (strain ATCC 25391 / DSM 10237 / CIP 104748 / NCIMB 11846 / Nb-255)</name>
    <dbReference type="NCBI Taxonomy" id="323098"/>
    <lineage>
        <taxon>Bacteria</taxon>
        <taxon>Pseudomonadati</taxon>
        <taxon>Pseudomonadota</taxon>
        <taxon>Alphaproteobacteria</taxon>
        <taxon>Hyphomicrobiales</taxon>
        <taxon>Nitrobacteraceae</taxon>
        <taxon>Nitrobacter</taxon>
    </lineage>
</organism>
<gene>
    <name evidence="1" type="primary">rpsS</name>
    <name type="ordered locus">Nwi_1368</name>
</gene>
<dbReference type="EMBL" id="CP000115">
    <property type="protein sequence ID" value="ABA04629.1"/>
    <property type="molecule type" value="Genomic_DNA"/>
</dbReference>
<dbReference type="RefSeq" id="WP_009797134.1">
    <property type="nucleotide sequence ID" value="NC_007406.1"/>
</dbReference>
<dbReference type="SMR" id="Q3SSW2"/>
<dbReference type="STRING" id="323098.Nwi_1368"/>
<dbReference type="KEGG" id="nwi:Nwi_1368"/>
<dbReference type="eggNOG" id="COG0185">
    <property type="taxonomic scope" value="Bacteria"/>
</dbReference>
<dbReference type="HOGENOM" id="CLU_144911_0_1_5"/>
<dbReference type="OrthoDB" id="9797833at2"/>
<dbReference type="Proteomes" id="UP000002531">
    <property type="component" value="Chromosome"/>
</dbReference>
<dbReference type="GO" id="GO:0005737">
    <property type="term" value="C:cytoplasm"/>
    <property type="evidence" value="ECO:0007669"/>
    <property type="project" value="UniProtKB-ARBA"/>
</dbReference>
<dbReference type="GO" id="GO:0015935">
    <property type="term" value="C:small ribosomal subunit"/>
    <property type="evidence" value="ECO:0007669"/>
    <property type="project" value="InterPro"/>
</dbReference>
<dbReference type="GO" id="GO:0019843">
    <property type="term" value="F:rRNA binding"/>
    <property type="evidence" value="ECO:0007669"/>
    <property type="project" value="UniProtKB-UniRule"/>
</dbReference>
<dbReference type="GO" id="GO:0003735">
    <property type="term" value="F:structural constituent of ribosome"/>
    <property type="evidence" value="ECO:0007669"/>
    <property type="project" value="InterPro"/>
</dbReference>
<dbReference type="GO" id="GO:0000028">
    <property type="term" value="P:ribosomal small subunit assembly"/>
    <property type="evidence" value="ECO:0007669"/>
    <property type="project" value="TreeGrafter"/>
</dbReference>
<dbReference type="GO" id="GO:0006412">
    <property type="term" value="P:translation"/>
    <property type="evidence" value="ECO:0007669"/>
    <property type="project" value="UniProtKB-UniRule"/>
</dbReference>
<dbReference type="FunFam" id="3.30.860.10:FF:000001">
    <property type="entry name" value="30S ribosomal protein S19"/>
    <property type="match status" value="1"/>
</dbReference>
<dbReference type="Gene3D" id="3.30.860.10">
    <property type="entry name" value="30s Ribosomal Protein S19, Chain A"/>
    <property type="match status" value="1"/>
</dbReference>
<dbReference type="HAMAP" id="MF_00531">
    <property type="entry name" value="Ribosomal_uS19"/>
    <property type="match status" value="1"/>
</dbReference>
<dbReference type="InterPro" id="IPR002222">
    <property type="entry name" value="Ribosomal_uS19"/>
</dbReference>
<dbReference type="InterPro" id="IPR005732">
    <property type="entry name" value="Ribosomal_uS19_bac-type"/>
</dbReference>
<dbReference type="InterPro" id="IPR020934">
    <property type="entry name" value="Ribosomal_uS19_CS"/>
</dbReference>
<dbReference type="InterPro" id="IPR023575">
    <property type="entry name" value="Ribosomal_uS19_SF"/>
</dbReference>
<dbReference type="NCBIfam" id="TIGR01050">
    <property type="entry name" value="rpsS_bact"/>
    <property type="match status" value="1"/>
</dbReference>
<dbReference type="PANTHER" id="PTHR11880">
    <property type="entry name" value="RIBOSOMAL PROTEIN S19P FAMILY MEMBER"/>
    <property type="match status" value="1"/>
</dbReference>
<dbReference type="PANTHER" id="PTHR11880:SF8">
    <property type="entry name" value="SMALL RIBOSOMAL SUBUNIT PROTEIN US19M"/>
    <property type="match status" value="1"/>
</dbReference>
<dbReference type="Pfam" id="PF00203">
    <property type="entry name" value="Ribosomal_S19"/>
    <property type="match status" value="1"/>
</dbReference>
<dbReference type="PIRSF" id="PIRSF002144">
    <property type="entry name" value="Ribosomal_S19"/>
    <property type="match status" value="1"/>
</dbReference>
<dbReference type="PRINTS" id="PR00975">
    <property type="entry name" value="RIBOSOMALS19"/>
</dbReference>
<dbReference type="SUPFAM" id="SSF54570">
    <property type="entry name" value="Ribosomal protein S19"/>
    <property type="match status" value="1"/>
</dbReference>
<dbReference type="PROSITE" id="PS00323">
    <property type="entry name" value="RIBOSOMAL_S19"/>
    <property type="match status" value="1"/>
</dbReference>
<feature type="chain" id="PRO_0000265390" description="Small ribosomal subunit protein uS19">
    <location>
        <begin position="1"/>
        <end position="92"/>
    </location>
</feature>
<reference key="1">
    <citation type="journal article" date="2006" name="Appl. Environ. Microbiol.">
        <title>Genome sequence of the chemolithoautotrophic nitrite-oxidizing bacterium Nitrobacter winogradskyi Nb-255.</title>
        <authorList>
            <person name="Starkenburg S.R."/>
            <person name="Chain P.S.G."/>
            <person name="Sayavedra-Soto L.A."/>
            <person name="Hauser L."/>
            <person name="Land M.L."/>
            <person name="Larimer F.W."/>
            <person name="Malfatti S.A."/>
            <person name="Klotz M.G."/>
            <person name="Bottomley P.J."/>
            <person name="Arp D.J."/>
            <person name="Hickey W.J."/>
        </authorList>
    </citation>
    <scope>NUCLEOTIDE SEQUENCE [LARGE SCALE GENOMIC DNA]</scope>
    <source>
        <strain>ATCC 25391 / DSM 10237 / CIP 104748 / NCIMB 11846 / Nb-255</strain>
    </source>
</reference>
<proteinExistence type="inferred from homology"/>
<protein>
    <recommendedName>
        <fullName evidence="1">Small ribosomal subunit protein uS19</fullName>
    </recommendedName>
    <alternativeName>
        <fullName evidence="2">30S ribosomal protein S19</fullName>
    </alternativeName>
</protein>
<keyword id="KW-1185">Reference proteome</keyword>
<keyword id="KW-0687">Ribonucleoprotein</keyword>
<keyword id="KW-0689">Ribosomal protein</keyword>
<keyword id="KW-0694">RNA-binding</keyword>
<keyword id="KW-0699">rRNA-binding</keyword>
<name>RS19_NITWN</name>